<keyword id="KW-0066">ATP synthesis</keyword>
<keyword id="KW-0138">CF(0)</keyword>
<keyword id="KW-0150">Chloroplast</keyword>
<keyword id="KW-0375">Hydrogen ion transport</keyword>
<keyword id="KW-0406">Ion transport</keyword>
<keyword id="KW-0472">Membrane</keyword>
<keyword id="KW-0934">Plastid</keyword>
<keyword id="KW-0793">Thylakoid</keyword>
<keyword id="KW-0812">Transmembrane</keyword>
<keyword id="KW-1133">Transmembrane helix</keyword>
<keyword id="KW-0813">Transport</keyword>
<name>ATPI_ATRBE</name>
<protein>
    <recommendedName>
        <fullName evidence="1">ATP synthase subunit a, chloroplastic</fullName>
    </recommendedName>
    <alternativeName>
        <fullName evidence="1">ATP synthase F0 sector subunit a</fullName>
    </alternativeName>
    <alternativeName>
        <fullName evidence="1">F-ATPase subunit IV</fullName>
    </alternativeName>
</protein>
<organism>
    <name type="scientific">Atropa belladonna</name>
    <name type="common">Belladonna</name>
    <name type="synonym">Deadly nightshade</name>
    <dbReference type="NCBI Taxonomy" id="33113"/>
    <lineage>
        <taxon>Eukaryota</taxon>
        <taxon>Viridiplantae</taxon>
        <taxon>Streptophyta</taxon>
        <taxon>Embryophyta</taxon>
        <taxon>Tracheophyta</taxon>
        <taxon>Spermatophyta</taxon>
        <taxon>Magnoliopsida</taxon>
        <taxon>eudicotyledons</taxon>
        <taxon>Gunneridae</taxon>
        <taxon>Pentapetalae</taxon>
        <taxon>asterids</taxon>
        <taxon>lamiids</taxon>
        <taxon>Solanales</taxon>
        <taxon>Solanaceae</taxon>
        <taxon>Solanoideae</taxon>
        <taxon>Hyoscyameae</taxon>
        <taxon>Atropa</taxon>
    </lineage>
</organism>
<reference key="1">
    <citation type="journal article" date="2002" name="Mol. Biol. Evol.">
        <title>The plastid chromosome of Atropa belladonna and its comparison with that of Nicotiana tabacum: the role of RNA editing in generating divergence in the process of plant speciation.</title>
        <authorList>
            <person name="Schmitz-Linneweber C."/>
            <person name="Regel R."/>
            <person name="Du T.G."/>
            <person name="Hupfer H."/>
            <person name="Herrmann R.G."/>
            <person name="Maier R.M."/>
        </authorList>
    </citation>
    <scope>NUCLEOTIDE SEQUENCE [LARGE SCALE GENOMIC DNA]</scope>
    <source>
        <strain>cv. Ab5p(kan)</strain>
    </source>
</reference>
<proteinExistence type="inferred from homology"/>
<sequence>MNVLSCSINTLKGLYDISGVEVGQHFYWQIGGFQVHGQVLITSWVVIAILLGSATIAVRNPQTIPTGGQNFFEYVLEFIRDVSKTQIGEEYGPWVPFIGTMFLFIFVSNWSGALLPWKIIQLPHGELAAPTNDINTTVALALLTSVAYFYAGLTKKGLGYFGKYIQPTPILLPINILEDFTKPLSLSFRLFGNILADELVVVVLVSLVPLVVPIPVMLLGLFTSGIQALIFATLAAAYIGESMEGHH</sequence>
<feature type="chain" id="PRO_0000002579" description="ATP synthase subunit a, chloroplastic">
    <location>
        <begin position="1"/>
        <end position="247"/>
    </location>
</feature>
<feature type="transmembrane region" description="Helical" evidence="1">
    <location>
        <begin position="38"/>
        <end position="58"/>
    </location>
</feature>
<feature type="transmembrane region" description="Helical" evidence="1">
    <location>
        <begin position="95"/>
        <end position="115"/>
    </location>
</feature>
<feature type="transmembrane region" description="Helical" evidence="1">
    <location>
        <begin position="134"/>
        <end position="154"/>
    </location>
</feature>
<feature type="transmembrane region" description="Helical" evidence="1">
    <location>
        <begin position="199"/>
        <end position="219"/>
    </location>
</feature>
<feature type="transmembrane region" description="Helical" evidence="1">
    <location>
        <begin position="220"/>
        <end position="240"/>
    </location>
</feature>
<comment type="function">
    <text evidence="1">Key component of the proton channel; it plays a direct role in the translocation of protons across the membrane.</text>
</comment>
<comment type="subunit">
    <text evidence="1">F-type ATPases have 2 components, CF(1) - the catalytic core - and CF(0) - the membrane proton channel. CF(1) has five subunits: alpha(3), beta(3), gamma(1), delta(1), epsilon(1). CF(0) has four main subunits: a, b, b' and c.</text>
</comment>
<comment type="subcellular location">
    <subcellularLocation>
        <location evidence="1">Plastid</location>
        <location evidence="1">Chloroplast thylakoid membrane</location>
        <topology evidence="1">Multi-pass membrane protein</topology>
    </subcellularLocation>
</comment>
<comment type="similarity">
    <text evidence="1">Belongs to the ATPase A chain family.</text>
</comment>
<evidence type="ECO:0000255" key="1">
    <source>
        <dbReference type="HAMAP-Rule" id="MF_01393"/>
    </source>
</evidence>
<accession>P69371</accession>
<accession>P06288</accession>
<dbReference type="EMBL" id="AJ316582">
    <property type="protein sequence ID" value="CAC88032.1"/>
    <property type="molecule type" value="Genomic_DNA"/>
</dbReference>
<dbReference type="RefSeq" id="NP_783220.1">
    <property type="nucleotide sequence ID" value="NC_004561.1"/>
</dbReference>
<dbReference type="SMR" id="P69371"/>
<dbReference type="GeneID" id="806524"/>
<dbReference type="GO" id="GO:0009535">
    <property type="term" value="C:chloroplast thylakoid membrane"/>
    <property type="evidence" value="ECO:0007669"/>
    <property type="project" value="UniProtKB-SubCell"/>
</dbReference>
<dbReference type="GO" id="GO:0005886">
    <property type="term" value="C:plasma membrane"/>
    <property type="evidence" value="ECO:0007669"/>
    <property type="project" value="UniProtKB-UniRule"/>
</dbReference>
<dbReference type="GO" id="GO:0045259">
    <property type="term" value="C:proton-transporting ATP synthase complex"/>
    <property type="evidence" value="ECO:0007669"/>
    <property type="project" value="UniProtKB-KW"/>
</dbReference>
<dbReference type="GO" id="GO:0046933">
    <property type="term" value="F:proton-transporting ATP synthase activity, rotational mechanism"/>
    <property type="evidence" value="ECO:0007669"/>
    <property type="project" value="UniProtKB-UniRule"/>
</dbReference>
<dbReference type="CDD" id="cd00310">
    <property type="entry name" value="ATP-synt_Fo_a_6"/>
    <property type="match status" value="1"/>
</dbReference>
<dbReference type="FunFam" id="1.20.120.220:FF:000001">
    <property type="entry name" value="ATP synthase subunit a, chloroplastic"/>
    <property type="match status" value="1"/>
</dbReference>
<dbReference type="Gene3D" id="1.20.120.220">
    <property type="entry name" value="ATP synthase, F0 complex, subunit A"/>
    <property type="match status" value="1"/>
</dbReference>
<dbReference type="HAMAP" id="MF_01393">
    <property type="entry name" value="ATP_synth_a_bact"/>
    <property type="match status" value="1"/>
</dbReference>
<dbReference type="InterPro" id="IPR045082">
    <property type="entry name" value="ATP_syn_F0_a_bact/chloroplast"/>
</dbReference>
<dbReference type="InterPro" id="IPR000568">
    <property type="entry name" value="ATP_synth_F0_asu"/>
</dbReference>
<dbReference type="InterPro" id="IPR023011">
    <property type="entry name" value="ATP_synth_F0_asu_AS"/>
</dbReference>
<dbReference type="InterPro" id="IPR035908">
    <property type="entry name" value="F0_ATP_A_sf"/>
</dbReference>
<dbReference type="NCBIfam" id="TIGR01131">
    <property type="entry name" value="ATP_synt_6_or_A"/>
    <property type="match status" value="1"/>
</dbReference>
<dbReference type="PANTHER" id="PTHR42823">
    <property type="entry name" value="ATP SYNTHASE SUBUNIT A, CHLOROPLASTIC"/>
    <property type="match status" value="1"/>
</dbReference>
<dbReference type="PANTHER" id="PTHR42823:SF3">
    <property type="entry name" value="ATP SYNTHASE SUBUNIT A, CHLOROPLASTIC"/>
    <property type="match status" value="1"/>
</dbReference>
<dbReference type="Pfam" id="PF00119">
    <property type="entry name" value="ATP-synt_A"/>
    <property type="match status" value="1"/>
</dbReference>
<dbReference type="PRINTS" id="PR00123">
    <property type="entry name" value="ATPASEA"/>
</dbReference>
<dbReference type="SUPFAM" id="SSF81336">
    <property type="entry name" value="F1F0 ATP synthase subunit A"/>
    <property type="match status" value="1"/>
</dbReference>
<dbReference type="PROSITE" id="PS00449">
    <property type="entry name" value="ATPASE_A"/>
    <property type="match status" value="1"/>
</dbReference>
<gene>
    <name evidence="1" type="primary">atpI</name>
</gene>
<geneLocation type="chloroplast"/>